<reference key="1">
    <citation type="journal article" date="2004" name="Nat. Genet.">
        <title>Complete sequencing and characterization of 21,243 full-length human cDNAs.</title>
        <authorList>
            <person name="Ota T."/>
            <person name="Suzuki Y."/>
            <person name="Nishikawa T."/>
            <person name="Otsuki T."/>
            <person name="Sugiyama T."/>
            <person name="Irie R."/>
            <person name="Wakamatsu A."/>
            <person name="Hayashi K."/>
            <person name="Sato H."/>
            <person name="Nagai K."/>
            <person name="Kimura K."/>
            <person name="Makita H."/>
            <person name="Sekine M."/>
            <person name="Obayashi M."/>
            <person name="Nishi T."/>
            <person name="Shibahara T."/>
            <person name="Tanaka T."/>
            <person name="Ishii S."/>
            <person name="Yamamoto J."/>
            <person name="Saito K."/>
            <person name="Kawai Y."/>
            <person name="Isono Y."/>
            <person name="Nakamura Y."/>
            <person name="Nagahari K."/>
            <person name="Murakami K."/>
            <person name="Yasuda T."/>
            <person name="Iwayanagi T."/>
            <person name="Wagatsuma M."/>
            <person name="Shiratori A."/>
            <person name="Sudo H."/>
            <person name="Hosoiri T."/>
            <person name="Kaku Y."/>
            <person name="Kodaira H."/>
            <person name="Kondo H."/>
            <person name="Sugawara M."/>
            <person name="Takahashi M."/>
            <person name="Kanda K."/>
            <person name="Yokoi T."/>
            <person name="Furuya T."/>
            <person name="Kikkawa E."/>
            <person name="Omura Y."/>
            <person name="Abe K."/>
            <person name="Kamihara K."/>
            <person name="Katsuta N."/>
            <person name="Sato K."/>
            <person name="Tanikawa M."/>
            <person name="Yamazaki M."/>
            <person name="Ninomiya K."/>
            <person name="Ishibashi T."/>
            <person name="Yamashita H."/>
            <person name="Murakawa K."/>
            <person name="Fujimori K."/>
            <person name="Tanai H."/>
            <person name="Kimata M."/>
            <person name="Watanabe M."/>
            <person name="Hiraoka S."/>
            <person name="Chiba Y."/>
            <person name="Ishida S."/>
            <person name="Ono Y."/>
            <person name="Takiguchi S."/>
            <person name="Watanabe S."/>
            <person name="Yosida M."/>
            <person name="Hotuta T."/>
            <person name="Kusano J."/>
            <person name="Kanehori K."/>
            <person name="Takahashi-Fujii A."/>
            <person name="Hara H."/>
            <person name="Tanase T.-O."/>
            <person name="Nomura Y."/>
            <person name="Togiya S."/>
            <person name="Komai F."/>
            <person name="Hara R."/>
            <person name="Takeuchi K."/>
            <person name="Arita M."/>
            <person name="Imose N."/>
            <person name="Musashino K."/>
            <person name="Yuuki H."/>
            <person name="Oshima A."/>
            <person name="Sasaki N."/>
            <person name="Aotsuka S."/>
            <person name="Yoshikawa Y."/>
            <person name="Matsunawa H."/>
            <person name="Ichihara T."/>
            <person name="Shiohata N."/>
            <person name="Sano S."/>
            <person name="Moriya S."/>
            <person name="Momiyama H."/>
            <person name="Satoh N."/>
            <person name="Takami S."/>
            <person name="Terashima Y."/>
            <person name="Suzuki O."/>
            <person name="Nakagawa S."/>
            <person name="Senoh A."/>
            <person name="Mizoguchi H."/>
            <person name="Goto Y."/>
            <person name="Shimizu F."/>
            <person name="Wakebe H."/>
            <person name="Hishigaki H."/>
            <person name="Watanabe T."/>
            <person name="Sugiyama A."/>
            <person name="Takemoto M."/>
            <person name="Kawakami B."/>
            <person name="Yamazaki M."/>
            <person name="Watanabe K."/>
            <person name="Kumagai A."/>
            <person name="Itakura S."/>
            <person name="Fukuzumi Y."/>
            <person name="Fujimori Y."/>
            <person name="Komiyama M."/>
            <person name="Tashiro H."/>
            <person name="Tanigami A."/>
            <person name="Fujiwara T."/>
            <person name="Ono T."/>
            <person name="Yamada K."/>
            <person name="Fujii Y."/>
            <person name="Ozaki K."/>
            <person name="Hirao M."/>
            <person name="Ohmori Y."/>
            <person name="Kawabata A."/>
            <person name="Hikiji T."/>
            <person name="Kobatake N."/>
            <person name="Inagaki H."/>
            <person name="Ikema Y."/>
            <person name="Okamoto S."/>
            <person name="Okitani R."/>
            <person name="Kawakami T."/>
            <person name="Noguchi S."/>
            <person name="Itoh T."/>
            <person name="Shigeta K."/>
            <person name="Senba T."/>
            <person name="Matsumura K."/>
            <person name="Nakajima Y."/>
            <person name="Mizuno T."/>
            <person name="Morinaga M."/>
            <person name="Sasaki M."/>
            <person name="Togashi T."/>
            <person name="Oyama M."/>
            <person name="Hata H."/>
            <person name="Watanabe M."/>
            <person name="Komatsu T."/>
            <person name="Mizushima-Sugano J."/>
            <person name="Satoh T."/>
            <person name="Shirai Y."/>
            <person name="Takahashi Y."/>
            <person name="Nakagawa K."/>
            <person name="Okumura K."/>
            <person name="Nagase T."/>
            <person name="Nomura N."/>
            <person name="Kikuchi H."/>
            <person name="Masuho Y."/>
            <person name="Yamashita R."/>
            <person name="Nakai K."/>
            <person name="Yada T."/>
            <person name="Nakamura Y."/>
            <person name="Ohara O."/>
            <person name="Isogai T."/>
            <person name="Sugano S."/>
        </authorList>
    </citation>
    <scope>NUCLEOTIDE SEQUENCE [LARGE SCALE MRNA]</scope>
    <scope>VARIANT ASP-55</scope>
    <source>
        <tissue>Testis</tissue>
    </source>
</reference>
<reference key="2">
    <citation type="journal article" date="2001" name="Nature">
        <title>The DNA sequence and comparative analysis of human chromosome 20.</title>
        <authorList>
            <person name="Deloukas P."/>
            <person name="Matthews L.H."/>
            <person name="Ashurst J.L."/>
            <person name="Burton J."/>
            <person name="Gilbert J.G.R."/>
            <person name="Jones M."/>
            <person name="Stavrides G."/>
            <person name="Almeida J.P."/>
            <person name="Babbage A.K."/>
            <person name="Bagguley C.L."/>
            <person name="Bailey J."/>
            <person name="Barlow K.F."/>
            <person name="Bates K.N."/>
            <person name="Beard L.M."/>
            <person name="Beare D.M."/>
            <person name="Beasley O.P."/>
            <person name="Bird C.P."/>
            <person name="Blakey S.E."/>
            <person name="Bridgeman A.M."/>
            <person name="Brown A.J."/>
            <person name="Buck D."/>
            <person name="Burrill W.D."/>
            <person name="Butler A.P."/>
            <person name="Carder C."/>
            <person name="Carter N.P."/>
            <person name="Chapman J.C."/>
            <person name="Clamp M."/>
            <person name="Clark G."/>
            <person name="Clark L.N."/>
            <person name="Clark S.Y."/>
            <person name="Clee C.M."/>
            <person name="Clegg S."/>
            <person name="Cobley V.E."/>
            <person name="Collier R.E."/>
            <person name="Connor R.E."/>
            <person name="Corby N.R."/>
            <person name="Coulson A."/>
            <person name="Coville G.J."/>
            <person name="Deadman R."/>
            <person name="Dhami P.D."/>
            <person name="Dunn M."/>
            <person name="Ellington A.G."/>
            <person name="Frankland J.A."/>
            <person name="Fraser A."/>
            <person name="French L."/>
            <person name="Garner P."/>
            <person name="Grafham D.V."/>
            <person name="Griffiths C."/>
            <person name="Griffiths M.N.D."/>
            <person name="Gwilliam R."/>
            <person name="Hall R.E."/>
            <person name="Hammond S."/>
            <person name="Harley J.L."/>
            <person name="Heath P.D."/>
            <person name="Ho S."/>
            <person name="Holden J.L."/>
            <person name="Howden P.J."/>
            <person name="Huckle E."/>
            <person name="Hunt A.R."/>
            <person name="Hunt S.E."/>
            <person name="Jekosch K."/>
            <person name="Johnson C.M."/>
            <person name="Johnson D."/>
            <person name="Kay M.P."/>
            <person name="Kimberley A.M."/>
            <person name="King A."/>
            <person name="Knights A."/>
            <person name="Laird G.K."/>
            <person name="Lawlor S."/>
            <person name="Lehvaeslaiho M.H."/>
            <person name="Leversha M.A."/>
            <person name="Lloyd C."/>
            <person name="Lloyd D.M."/>
            <person name="Lovell J.D."/>
            <person name="Marsh V.L."/>
            <person name="Martin S.L."/>
            <person name="McConnachie L.J."/>
            <person name="McLay K."/>
            <person name="McMurray A.A."/>
            <person name="Milne S.A."/>
            <person name="Mistry D."/>
            <person name="Moore M.J.F."/>
            <person name="Mullikin J.C."/>
            <person name="Nickerson T."/>
            <person name="Oliver K."/>
            <person name="Parker A."/>
            <person name="Patel R."/>
            <person name="Pearce T.A.V."/>
            <person name="Peck A.I."/>
            <person name="Phillimore B.J.C.T."/>
            <person name="Prathalingam S.R."/>
            <person name="Plumb R.W."/>
            <person name="Ramsay H."/>
            <person name="Rice C.M."/>
            <person name="Ross M.T."/>
            <person name="Scott C.E."/>
            <person name="Sehra H.K."/>
            <person name="Shownkeen R."/>
            <person name="Sims S."/>
            <person name="Skuce C.D."/>
            <person name="Smith M.L."/>
            <person name="Soderlund C."/>
            <person name="Steward C.A."/>
            <person name="Sulston J.E."/>
            <person name="Swann R.M."/>
            <person name="Sycamore N."/>
            <person name="Taylor R."/>
            <person name="Tee L."/>
            <person name="Thomas D.W."/>
            <person name="Thorpe A."/>
            <person name="Tracey A."/>
            <person name="Tromans A.C."/>
            <person name="Vaudin M."/>
            <person name="Wall M."/>
            <person name="Wallis J.M."/>
            <person name="Whitehead S.L."/>
            <person name="Whittaker P."/>
            <person name="Willey D.L."/>
            <person name="Williams L."/>
            <person name="Williams S.A."/>
            <person name="Wilming L."/>
            <person name="Wray P.W."/>
            <person name="Hubbard T."/>
            <person name="Durbin R.M."/>
            <person name="Bentley D.R."/>
            <person name="Beck S."/>
            <person name="Rogers J."/>
        </authorList>
    </citation>
    <scope>NUCLEOTIDE SEQUENCE [LARGE SCALE GENOMIC DNA]</scope>
</reference>
<reference key="3">
    <citation type="submission" date="2005-09" db="EMBL/GenBank/DDBJ databases">
        <authorList>
            <person name="Mural R.J."/>
            <person name="Istrail S."/>
            <person name="Sutton G.G."/>
            <person name="Florea L."/>
            <person name="Halpern A.L."/>
            <person name="Mobarry C.M."/>
            <person name="Lippert R."/>
            <person name="Walenz B."/>
            <person name="Shatkay H."/>
            <person name="Dew I."/>
            <person name="Miller J.R."/>
            <person name="Flanigan M.J."/>
            <person name="Edwards N.J."/>
            <person name="Bolanos R."/>
            <person name="Fasulo D."/>
            <person name="Halldorsson B.V."/>
            <person name="Hannenhalli S."/>
            <person name="Turner R."/>
            <person name="Yooseph S."/>
            <person name="Lu F."/>
            <person name="Nusskern D.R."/>
            <person name="Shue B.C."/>
            <person name="Zheng X.H."/>
            <person name="Zhong F."/>
            <person name="Delcher A.L."/>
            <person name="Huson D.H."/>
            <person name="Kravitz S.A."/>
            <person name="Mouchard L."/>
            <person name="Reinert K."/>
            <person name="Remington K.A."/>
            <person name="Clark A.G."/>
            <person name="Waterman M.S."/>
            <person name="Eichler E.E."/>
            <person name="Adams M.D."/>
            <person name="Hunkapiller M.W."/>
            <person name="Myers E.W."/>
            <person name="Venter J.C."/>
        </authorList>
    </citation>
    <scope>NUCLEOTIDE SEQUENCE [LARGE SCALE GENOMIC DNA]</scope>
    <scope>VARIANT ASP-55</scope>
</reference>
<reference key="4">
    <citation type="journal article" date="2004" name="Genome Res.">
        <title>The status, quality, and expansion of the NIH full-length cDNA project: the Mammalian Gene Collection (MGC).</title>
        <authorList>
            <consortium name="The MGC Project Team"/>
        </authorList>
    </citation>
    <scope>NUCLEOTIDE SEQUENCE [LARGE SCALE MRNA]</scope>
    <scope>VARIANT ASP-55</scope>
    <source>
        <tissue>Medulla oblongata</tissue>
    </source>
</reference>
<accession>Q9H106</accession>
<accession>B3KS88</accession>
<accession>Q5TFQ6</accession>
<evidence type="ECO:0000255" key="1"/>
<evidence type="ECO:0000255" key="2">
    <source>
        <dbReference type="PROSITE-ProRule" id="PRU00114"/>
    </source>
</evidence>
<evidence type="ECO:0000256" key="3">
    <source>
        <dbReference type="SAM" id="MobiDB-lite"/>
    </source>
</evidence>
<evidence type="ECO:0000269" key="4">
    <source>
    </source>
</evidence>
<evidence type="ECO:0000269" key="5">
    <source>
    </source>
</evidence>
<evidence type="ECO:0000269" key="6">
    <source ref="3"/>
</evidence>
<evidence type="ECO:0000305" key="7"/>
<protein>
    <recommendedName>
        <fullName>Signal-regulatory protein delta</fullName>
        <shortName>SIRP-delta</shortName>
    </recommendedName>
    <alternativeName>
        <fullName>Protein tyrosine phosphatase non-receptor type substrate 1-like 2</fullName>
    </alternativeName>
</protein>
<sequence length="197" mass="21687">MPIPASPLHPPLPSLLLYLLLELAGVTHVFHVQQTEMSQTVSTGESIILSCSVPNTLPNGPVLWFKGTGPNRKLIYNFKQGNFPRVKEIGDTTKPGNTDFSTRIREISLADAGTYYCVKFIKGRAIKEYQSGRGTQVFVTEQNPRPPKNRPAGRAGSRAHHDAHTCLSALPERNSTNYFVQPCCCLRLLGLTGLLSK</sequence>
<gene>
    <name type="primary">SIRPD</name>
    <name type="synonym">PTPNS1L2</name>
</gene>
<dbReference type="EMBL" id="AK093083">
    <property type="protein sequence ID" value="BAG52650.1"/>
    <property type="molecule type" value="mRNA"/>
</dbReference>
<dbReference type="EMBL" id="AL049634">
    <property type="status" value="NOT_ANNOTATED_CDS"/>
    <property type="molecule type" value="Genomic_DNA"/>
</dbReference>
<dbReference type="EMBL" id="CH471133">
    <property type="protein sequence ID" value="EAX10624.1"/>
    <property type="molecule type" value="Genomic_DNA"/>
</dbReference>
<dbReference type="EMBL" id="BC033502">
    <property type="protein sequence ID" value="AAH33502.1"/>
    <property type="molecule type" value="mRNA"/>
</dbReference>
<dbReference type="CCDS" id="CCDS13018.1"/>
<dbReference type="RefSeq" id="NP_848555.2">
    <property type="nucleotide sequence ID" value="NM_178460.3"/>
</dbReference>
<dbReference type="SMR" id="Q9H106"/>
<dbReference type="BioGRID" id="126140">
    <property type="interactions" value="99"/>
</dbReference>
<dbReference type="FunCoup" id="Q9H106">
    <property type="interactions" value="321"/>
</dbReference>
<dbReference type="IntAct" id="Q9H106">
    <property type="interactions" value="85"/>
</dbReference>
<dbReference type="STRING" id="9606.ENSP00000371036"/>
<dbReference type="GlyCosmos" id="Q9H106">
    <property type="glycosylation" value="1 site, No reported glycans"/>
</dbReference>
<dbReference type="GlyGen" id="Q9H106">
    <property type="glycosylation" value="1 site"/>
</dbReference>
<dbReference type="iPTMnet" id="Q9H106"/>
<dbReference type="PhosphoSitePlus" id="Q9H106"/>
<dbReference type="BioMuta" id="SIRPD"/>
<dbReference type="DMDM" id="34395825"/>
<dbReference type="MassIVE" id="Q9H106"/>
<dbReference type="PaxDb" id="9606-ENSP00000371036"/>
<dbReference type="PeptideAtlas" id="Q9H106"/>
<dbReference type="ProteomicsDB" id="80348"/>
<dbReference type="Antibodypedia" id="35104">
    <property type="antibodies" value="102 antibodies from 18 providers"/>
</dbReference>
<dbReference type="DNASU" id="128646"/>
<dbReference type="Ensembl" id="ENST00000381623.4">
    <property type="protein sequence ID" value="ENSP00000371036.3"/>
    <property type="gene ID" value="ENSG00000125900.13"/>
</dbReference>
<dbReference type="GeneID" id="128646"/>
<dbReference type="KEGG" id="hsa:128646"/>
<dbReference type="MANE-Select" id="ENST00000381623.4">
    <property type="protein sequence ID" value="ENSP00000371036.3"/>
    <property type="RefSeq nucleotide sequence ID" value="NM_178460.3"/>
    <property type="RefSeq protein sequence ID" value="NP_848555.2"/>
</dbReference>
<dbReference type="UCSC" id="uc002wfi.4">
    <property type="organism name" value="human"/>
</dbReference>
<dbReference type="AGR" id="HGNC:16248"/>
<dbReference type="CTD" id="128646"/>
<dbReference type="DisGeNET" id="128646"/>
<dbReference type="GeneCards" id="SIRPD"/>
<dbReference type="HGNC" id="HGNC:16248">
    <property type="gene designation" value="SIRPD"/>
</dbReference>
<dbReference type="HPA" id="ENSG00000125900">
    <property type="expression patterns" value="Tissue enriched (testis)"/>
</dbReference>
<dbReference type="neXtProt" id="NX_Q9H106"/>
<dbReference type="OpenTargets" id="ENSG00000125900"/>
<dbReference type="PharmGKB" id="PA34008"/>
<dbReference type="VEuPathDB" id="HostDB:ENSG00000125900"/>
<dbReference type="eggNOG" id="ENOG502SHRM">
    <property type="taxonomic scope" value="Eukaryota"/>
</dbReference>
<dbReference type="GeneTree" id="ENSGT00960000186656"/>
<dbReference type="InParanoid" id="Q9H106"/>
<dbReference type="OrthoDB" id="6370831at2759"/>
<dbReference type="PAN-GO" id="Q9H106">
    <property type="GO annotations" value="1 GO annotation based on evolutionary models"/>
</dbReference>
<dbReference type="PhylomeDB" id="Q9H106"/>
<dbReference type="PathwayCommons" id="Q9H106"/>
<dbReference type="SignaLink" id="Q9H106"/>
<dbReference type="BioGRID-ORCS" id="128646">
    <property type="hits" value="6 hits in 1149 CRISPR screens"/>
</dbReference>
<dbReference type="GenomeRNAi" id="128646"/>
<dbReference type="Pharos" id="Q9H106">
    <property type="development level" value="Tdark"/>
</dbReference>
<dbReference type="PRO" id="PR:Q9H106"/>
<dbReference type="Proteomes" id="UP000005640">
    <property type="component" value="Chromosome 20"/>
</dbReference>
<dbReference type="RNAct" id="Q9H106">
    <property type="molecule type" value="protein"/>
</dbReference>
<dbReference type="Bgee" id="ENSG00000125900">
    <property type="expression patterns" value="Expressed in sperm and 100 other cell types or tissues"/>
</dbReference>
<dbReference type="ExpressionAtlas" id="Q9H106">
    <property type="expression patterns" value="baseline and differential"/>
</dbReference>
<dbReference type="GO" id="GO:0005576">
    <property type="term" value="C:extracellular region"/>
    <property type="evidence" value="ECO:0007669"/>
    <property type="project" value="UniProtKB-SubCell"/>
</dbReference>
<dbReference type="GO" id="GO:0005886">
    <property type="term" value="C:plasma membrane"/>
    <property type="evidence" value="ECO:0000318"/>
    <property type="project" value="GO_Central"/>
</dbReference>
<dbReference type="FunFam" id="2.60.40.10:FF:000295">
    <property type="entry name" value="Tyrosine-protein phosphatase non-receptor type substrate 1"/>
    <property type="match status" value="1"/>
</dbReference>
<dbReference type="Gene3D" id="2.60.40.10">
    <property type="entry name" value="Immunoglobulins"/>
    <property type="match status" value="1"/>
</dbReference>
<dbReference type="InterPro" id="IPR051755">
    <property type="entry name" value="Ig-like_CS_Receptor"/>
</dbReference>
<dbReference type="InterPro" id="IPR007110">
    <property type="entry name" value="Ig-like_dom"/>
</dbReference>
<dbReference type="InterPro" id="IPR036179">
    <property type="entry name" value="Ig-like_dom_sf"/>
</dbReference>
<dbReference type="InterPro" id="IPR013783">
    <property type="entry name" value="Ig-like_fold"/>
</dbReference>
<dbReference type="InterPro" id="IPR003599">
    <property type="entry name" value="Ig_sub"/>
</dbReference>
<dbReference type="InterPro" id="IPR013106">
    <property type="entry name" value="Ig_V-set"/>
</dbReference>
<dbReference type="PANTHER" id="PTHR19971">
    <property type="entry name" value="SIGNAL-REGULATORY PROTEIN BETA"/>
    <property type="match status" value="1"/>
</dbReference>
<dbReference type="Pfam" id="PF07686">
    <property type="entry name" value="V-set"/>
    <property type="match status" value="1"/>
</dbReference>
<dbReference type="SMART" id="SM00409">
    <property type="entry name" value="IG"/>
    <property type="match status" value="1"/>
</dbReference>
<dbReference type="SUPFAM" id="SSF48726">
    <property type="entry name" value="Immunoglobulin"/>
    <property type="match status" value="1"/>
</dbReference>
<dbReference type="PROSITE" id="PS50835">
    <property type="entry name" value="IG_LIKE"/>
    <property type="match status" value="1"/>
</dbReference>
<keyword id="KW-1015">Disulfide bond</keyword>
<keyword id="KW-0325">Glycoprotein</keyword>
<keyword id="KW-0393">Immunoglobulin domain</keyword>
<keyword id="KW-1267">Proteomics identification</keyword>
<keyword id="KW-1185">Reference proteome</keyword>
<keyword id="KW-0964">Secreted</keyword>
<keyword id="KW-0732">Signal</keyword>
<name>SIRPD_HUMAN</name>
<proteinExistence type="evidence at protein level"/>
<comment type="subcellular location">
    <subcellularLocation>
        <location evidence="7">Secreted</location>
    </subcellularLocation>
</comment>
<organism>
    <name type="scientific">Homo sapiens</name>
    <name type="common">Human</name>
    <dbReference type="NCBI Taxonomy" id="9606"/>
    <lineage>
        <taxon>Eukaryota</taxon>
        <taxon>Metazoa</taxon>
        <taxon>Chordata</taxon>
        <taxon>Craniata</taxon>
        <taxon>Vertebrata</taxon>
        <taxon>Euteleostomi</taxon>
        <taxon>Mammalia</taxon>
        <taxon>Eutheria</taxon>
        <taxon>Euarchontoglires</taxon>
        <taxon>Primates</taxon>
        <taxon>Haplorrhini</taxon>
        <taxon>Catarrhini</taxon>
        <taxon>Hominidae</taxon>
        <taxon>Homo</taxon>
    </lineage>
</organism>
<feature type="signal peptide" evidence="1">
    <location>
        <begin position="1"/>
        <end position="29"/>
    </location>
</feature>
<feature type="chain" id="PRO_0000014919" description="Signal-regulatory protein delta">
    <location>
        <begin position="30"/>
        <end position="197"/>
    </location>
</feature>
<feature type="domain" description="Ig-like V-type">
    <location>
        <begin position="31"/>
        <end position="135"/>
    </location>
</feature>
<feature type="region of interest" description="Disordered" evidence="3">
    <location>
        <begin position="139"/>
        <end position="158"/>
    </location>
</feature>
<feature type="glycosylation site" description="N-linked (GlcNAc...) asparagine" evidence="1">
    <location>
        <position position="174"/>
    </location>
</feature>
<feature type="disulfide bond" evidence="2">
    <location>
        <begin position="51"/>
        <end position="117"/>
    </location>
</feature>
<feature type="sequence variant" id="VAR_056078" description="In dbSNP:rs2249317." evidence="4 5 6">
    <original>N</original>
    <variation>D</variation>
    <location>
        <position position="55"/>
    </location>
</feature>